<gene>
    <name type="ordered locus">Cbei_0202</name>
</gene>
<accession>Q05627</accession>
<accession>A6LPW2</accession>
<organism>
    <name type="scientific">Clostridium beijerinckii (strain ATCC 51743 / NCIMB 8052)</name>
    <name type="common">Clostridium acetobutylicum</name>
    <dbReference type="NCBI Taxonomy" id="290402"/>
    <lineage>
        <taxon>Bacteria</taxon>
        <taxon>Bacillati</taxon>
        <taxon>Bacillota</taxon>
        <taxon>Clostridia</taxon>
        <taxon>Eubacteriales</taxon>
        <taxon>Clostridiaceae</taxon>
        <taxon>Clostridium</taxon>
    </lineage>
</organism>
<dbReference type="EMBL" id="CP000721">
    <property type="protein sequence ID" value="ABR32392.1"/>
    <property type="molecule type" value="Genomic_DNA"/>
</dbReference>
<dbReference type="EMBL" id="L04468">
    <property type="protein sequence ID" value="AAA52079.1"/>
    <property type="molecule type" value="Genomic_DNA"/>
</dbReference>
<dbReference type="RefSeq" id="WP_011967554.1">
    <property type="nucleotide sequence ID" value="NC_009617.1"/>
</dbReference>
<dbReference type="SMR" id="Q05627"/>
<dbReference type="KEGG" id="cbe:Cbei_0202"/>
<dbReference type="eggNOG" id="COG2509">
    <property type="taxonomic scope" value="Bacteria"/>
</dbReference>
<dbReference type="HOGENOM" id="CLU_028644_3_0_9"/>
<dbReference type="Proteomes" id="UP000000565">
    <property type="component" value="Chromosome"/>
</dbReference>
<dbReference type="GO" id="GO:0016491">
    <property type="term" value="F:oxidoreductase activity"/>
    <property type="evidence" value="ECO:0007669"/>
    <property type="project" value="InterPro"/>
</dbReference>
<dbReference type="Gene3D" id="3.30.70.2700">
    <property type="match status" value="1"/>
</dbReference>
<dbReference type="Gene3D" id="3.50.50.60">
    <property type="entry name" value="FAD/NAD(P)-binding domain"/>
    <property type="match status" value="2"/>
</dbReference>
<dbReference type="InterPro" id="IPR028348">
    <property type="entry name" value="FAD-binding_protein"/>
</dbReference>
<dbReference type="InterPro" id="IPR049516">
    <property type="entry name" value="FAD-depend_C"/>
</dbReference>
<dbReference type="InterPro" id="IPR036188">
    <property type="entry name" value="FAD/NAD-bd_sf"/>
</dbReference>
<dbReference type="InterPro" id="IPR023753">
    <property type="entry name" value="FAD/NAD-binding_dom"/>
</dbReference>
<dbReference type="PANTHER" id="PTHR42842">
    <property type="entry name" value="FAD/NAD(P)-BINDING OXIDOREDUCTASE"/>
    <property type="match status" value="1"/>
</dbReference>
<dbReference type="PANTHER" id="PTHR42842:SF3">
    <property type="entry name" value="FAD_NAD(P)-BINDING OXIDOREDUCTASE FAMILY PROTEIN"/>
    <property type="match status" value="1"/>
</dbReference>
<dbReference type="Pfam" id="PF21688">
    <property type="entry name" value="FAD-depend_C"/>
    <property type="match status" value="1"/>
</dbReference>
<dbReference type="Pfam" id="PF07992">
    <property type="entry name" value="Pyr_redox_2"/>
    <property type="match status" value="1"/>
</dbReference>
<dbReference type="PIRSF" id="PIRSF038984">
    <property type="entry name" value="FAD_binding_protein"/>
    <property type="match status" value="1"/>
</dbReference>
<dbReference type="SUPFAM" id="SSF51905">
    <property type="entry name" value="FAD/NAD(P)-binding domain"/>
    <property type="match status" value="1"/>
</dbReference>
<name>Y202_CLOB8</name>
<reference key="1">
    <citation type="submission" date="2007-06" db="EMBL/GenBank/DDBJ databases">
        <title>Complete sequence of Clostridium beijerinckii NCIMB 8052.</title>
        <authorList>
            <consortium name="US DOE Joint Genome Institute"/>
            <person name="Copeland A."/>
            <person name="Lucas S."/>
            <person name="Lapidus A."/>
            <person name="Barry K."/>
            <person name="Detter J.C."/>
            <person name="Glavina del Rio T."/>
            <person name="Hammon N."/>
            <person name="Israni S."/>
            <person name="Dalin E."/>
            <person name="Tice H."/>
            <person name="Pitluck S."/>
            <person name="Sims D."/>
            <person name="Brettin T."/>
            <person name="Bruce D."/>
            <person name="Tapia R."/>
            <person name="Brainard J."/>
            <person name="Schmutz J."/>
            <person name="Larimer F."/>
            <person name="Land M."/>
            <person name="Hauser L."/>
            <person name="Kyrpides N."/>
            <person name="Mikhailova N."/>
            <person name="Bennet G."/>
            <person name="Cann I."/>
            <person name="Chen J.-S."/>
            <person name="Contreras A.L."/>
            <person name="Jones D."/>
            <person name="Kashket E."/>
            <person name="Mitchell W."/>
            <person name="Stoddard S."/>
            <person name="Schwarz W."/>
            <person name="Qureshi N."/>
            <person name="Young M."/>
            <person name="Shi Z."/>
            <person name="Ezeji T."/>
            <person name="White B."/>
            <person name="Blaschek H."/>
            <person name="Richardson P."/>
        </authorList>
    </citation>
    <scope>NUCLEOTIDE SEQUENCE [LARGE SCALE GENOMIC DNA]</scope>
    <source>
        <strain>ATCC 51743 / NCIMB 8052</strain>
    </source>
</reference>
<reference key="2">
    <citation type="journal article" date="1993" name="Gene">
        <title>Cloning and sequence analysis of the genes encoding phosphotransbutyrylase and butyrate kinase from Clostridium acetobutylicum NCIMB 8052.</title>
        <authorList>
            <person name="Oultram J.D."/>
            <person name="Burr I.D."/>
            <person name="Elmore M.J."/>
            <person name="Minton N.P."/>
        </authorList>
    </citation>
    <scope>NUCLEOTIDE SEQUENCE [GENOMIC DNA] OF 434-533</scope>
</reference>
<feature type="chain" id="PRO_0000066418" description="Uncharacterized protein Cbei_0202">
    <location>
        <begin position="1"/>
        <end position="533"/>
    </location>
</feature>
<protein>
    <recommendedName>
        <fullName>Uncharacterized protein Cbei_0202</fullName>
    </recommendedName>
    <alternativeName>
        <fullName>ORF1</fullName>
    </alternativeName>
</protein>
<sequence length="533" mass="59219">MAIRINNINLSLDDDLNVLEKKICKKLNMSKEDISRLDIIKRSIDARKKNDIKVSFSVNVFCKKEKMLLSRIHDKDISFEEIREIESIKSGTEEIKARPVVVGFGPAGIFAALTLARYGYKPIVYERGEDVDKRTETVEKFWKDGRLNLESNVQFGEGGAGAFSDGKLTTRIKDHRCSFVLDELIKAGAPAEIKYESKAHVGTDLLKGVVKNIREEIKRLGGEVNFNSKLEKITYKDGKLESIVVNGKNITCEALVLAIGHSSRDTYEMLYRENVSMDAKAFAIGVRIEHPQELINVNQYGNNHNHPKLHAADYRLTYQSEKLKRGVYSFCMCPGGVVVAAASEEGRLVSNGMSYHARDLDNANSALVVTVSPEDFKGSSPLRGMEFQRHYESLAFKLGGGNYKAPVQLVGDFMKDRVSTKLGEVIPSYTAGYEFRELKECLPDYVVEALKEGIINFDKKIKGYAREDAILTGIETRTSAPVRLNRNASLESINVCGLYPTGEGAGFAGGIISAAVDGIKVAEHIIEKFDLPK</sequence>
<proteinExistence type="predicted"/>